<accession>Q5ULB0</accession>
<dbReference type="EC" id="7.1.1.2" evidence="1"/>
<dbReference type="EMBL" id="AY684273">
    <property type="protein sequence ID" value="AAV37053.1"/>
    <property type="molecule type" value="Genomic_DNA"/>
</dbReference>
<dbReference type="SMR" id="Q5ULB0"/>
<dbReference type="Proteomes" id="UP000694520">
    <property type="component" value="Unplaced"/>
</dbReference>
<dbReference type="GO" id="GO:0005743">
    <property type="term" value="C:mitochondrial inner membrane"/>
    <property type="evidence" value="ECO:0000250"/>
    <property type="project" value="UniProtKB"/>
</dbReference>
<dbReference type="GO" id="GO:0008137">
    <property type="term" value="F:NADH dehydrogenase (ubiquinone) activity"/>
    <property type="evidence" value="ECO:0000250"/>
    <property type="project" value="UniProtKB"/>
</dbReference>
<dbReference type="GO" id="GO:0006120">
    <property type="term" value="P:mitochondrial electron transport, NADH to ubiquinone"/>
    <property type="evidence" value="ECO:0000250"/>
    <property type="project" value="UniProtKB"/>
</dbReference>
<dbReference type="GO" id="GO:0032981">
    <property type="term" value="P:mitochondrial respiratory chain complex I assembly"/>
    <property type="evidence" value="ECO:0000250"/>
    <property type="project" value="UniProtKB"/>
</dbReference>
<dbReference type="Gene3D" id="1.20.120.1200">
    <property type="entry name" value="NADH-ubiquinone/plastoquinone oxidoreductase chain 6, subunit NuoJ"/>
    <property type="match status" value="1"/>
</dbReference>
<dbReference type="InterPro" id="IPR050269">
    <property type="entry name" value="ComplexI_Subunit6"/>
</dbReference>
<dbReference type="InterPro" id="IPR001457">
    <property type="entry name" value="NADH_UbQ/plastoQ_OxRdtase_su6"/>
</dbReference>
<dbReference type="InterPro" id="IPR042106">
    <property type="entry name" value="Nuo/plastoQ_OxRdtase_6_NuoJ"/>
</dbReference>
<dbReference type="PANTHER" id="PTHR11435">
    <property type="entry name" value="NADH UBIQUINONE OXIDOREDUCTASE SUBUNIT ND6"/>
    <property type="match status" value="1"/>
</dbReference>
<dbReference type="PANTHER" id="PTHR11435:SF1">
    <property type="entry name" value="NADH-UBIQUINONE OXIDOREDUCTASE CHAIN 6"/>
    <property type="match status" value="1"/>
</dbReference>
<dbReference type="Pfam" id="PF00499">
    <property type="entry name" value="Oxidored_q3"/>
    <property type="match status" value="1"/>
</dbReference>
<organism>
    <name type="scientific">Bos mutus grunniens</name>
    <name type="common">Wild yak</name>
    <name type="synonym">Bos grunniens</name>
    <dbReference type="NCBI Taxonomy" id="30521"/>
    <lineage>
        <taxon>Eukaryota</taxon>
        <taxon>Metazoa</taxon>
        <taxon>Chordata</taxon>
        <taxon>Craniata</taxon>
        <taxon>Vertebrata</taxon>
        <taxon>Euteleostomi</taxon>
        <taxon>Mammalia</taxon>
        <taxon>Eutheria</taxon>
        <taxon>Laurasiatheria</taxon>
        <taxon>Artiodactyla</taxon>
        <taxon>Ruminantia</taxon>
        <taxon>Pecora</taxon>
        <taxon>Bovidae</taxon>
        <taxon>Bovinae</taxon>
        <taxon>Bos</taxon>
    </lineage>
</organism>
<feature type="chain" id="PRO_0000253524" description="NADH-ubiquinone oxidoreductase chain 6">
    <location>
        <begin position="1"/>
        <end position="175"/>
    </location>
</feature>
<feature type="transmembrane region" description="Helical" evidence="3">
    <location>
        <begin position="1"/>
        <end position="21"/>
    </location>
</feature>
<feature type="transmembrane region" description="Helical" evidence="3">
    <location>
        <begin position="25"/>
        <end position="45"/>
    </location>
</feature>
<feature type="transmembrane region" description="Helical" evidence="3">
    <location>
        <begin position="47"/>
        <end position="67"/>
    </location>
</feature>
<feature type="transmembrane region" description="Helical" evidence="3">
    <location>
        <begin position="88"/>
        <end position="108"/>
    </location>
</feature>
<feature type="transmembrane region" description="Helical" evidence="3">
    <location>
        <begin position="149"/>
        <end position="169"/>
    </location>
</feature>
<sequence>MMLYIVFILSVIFVIGFVGFSSKPSPIYGGLGLIVSGGVGCGIVLNFGGSFLGLMVFLIYLGGMMVVFGYTTAMATEQYPEIWLLNKAVLGAFITALLMEFFMVYYVLKDKEVEIVFEFNGLGDWVIYDTGDSGFFSEEAMGIAALYSYGTWLVIVTGWSLFIGVVVIMEITRGN</sequence>
<gene>
    <name type="primary">MT-ND6</name>
    <name type="synonym">MTND6</name>
    <name type="synonym">NADH6</name>
    <name type="synonym">ND6</name>
</gene>
<geneLocation type="mitochondrion"/>
<proteinExistence type="inferred from homology"/>
<name>NU6M_BOSMU</name>
<protein>
    <recommendedName>
        <fullName>NADH-ubiquinone oxidoreductase chain 6</fullName>
        <ecNumber evidence="1">7.1.1.2</ecNumber>
    </recommendedName>
    <alternativeName>
        <fullName>NADH dehydrogenase subunit 6</fullName>
    </alternativeName>
</protein>
<keyword id="KW-0249">Electron transport</keyword>
<keyword id="KW-0472">Membrane</keyword>
<keyword id="KW-0496">Mitochondrion</keyword>
<keyword id="KW-0999">Mitochondrion inner membrane</keyword>
<keyword id="KW-0520">NAD</keyword>
<keyword id="KW-1185">Reference proteome</keyword>
<keyword id="KW-0679">Respiratory chain</keyword>
<keyword id="KW-1278">Translocase</keyword>
<keyword id="KW-0812">Transmembrane</keyword>
<keyword id="KW-1133">Transmembrane helix</keyword>
<keyword id="KW-0813">Transport</keyword>
<keyword id="KW-0830">Ubiquinone</keyword>
<comment type="function">
    <text evidence="1">Core subunit of the mitochondrial membrane respiratory chain NADH dehydrogenase (Complex I) which catalyzes electron transfer from NADH through the respiratory chain, using ubiquinone as an electron acceptor. Essential for the catalytic activity and assembly of complex I.</text>
</comment>
<comment type="catalytic activity">
    <reaction evidence="1">
        <text>a ubiquinone + NADH + 5 H(+)(in) = a ubiquinol + NAD(+) + 4 H(+)(out)</text>
        <dbReference type="Rhea" id="RHEA:29091"/>
        <dbReference type="Rhea" id="RHEA-COMP:9565"/>
        <dbReference type="Rhea" id="RHEA-COMP:9566"/>
        <dbReference type="ChEBI" id="CHEBI:15378"/>
        <dbReference type="ChEBI" id="CHEBI:16389"/>
        <dbReference type="ChEBI" id="CHEBI:17976"/>
        <dbReference type="ChEBI" id="CHEBI:57540"/>
        <dbReference type="ChEBI" id="CHEBI:57945"/>
        <dbReference type="EC" id="7.1.1.2"/>
    </reaction>
</comment>
<comment type="subunit">
    <text evidence="2">Core subunit of respiratory chain NADH dehydrogenase (Complex I) which is composed of 45 different subunits.</text>
</comment>
<comment type="subcellular location">
    <subcellularLocation>
        <location evidence="2">Mitochondrion inner membrane</location>
        <topology evidence="3">Multi-pass membrane protein</topology>
    </subcellularLocation>
</comment>
<comment type="similarity">
    <text evidence="4">Belongs to the complex I subunit 6 family.</text>
</comment>
<reference key="1">
    <citation type="submission" date="2004-10" db="EMBL/GenBank/DDBJ databases">
        <title>Complete sequence of the Yak (Bos grunniens.) mitochondrial genome and its genetic relationship with related species.</title>
        <authorList>
            <person name="Gu Z."/>
            <person name="Zhao X."/>
            <person name="Li N."/>
            <person name="Wu C."/>
        </authorList>
    </citation>
    <scope>NUCLEOTIDE SEQUENCE [GENOMIC DNA]</scope>
</reference>
<evidence type="ECO:0000250" key="1">
    <source>
        <dbReference type="UniProtKB" id="P03923"/>
    </source>
</evidence>
<evidence type="ECO:0000250" key="2">
    <source>
        <dbReference type="UniProtKB" id="P03924"/>
    </source>
</evidence>
<evidence type="ECO:0000255" key="3"/>
<evidence type="ECO:0000305" key="4"/>